<sequence>MAFETFSVALDKDKTLIFETGKIARQASGAVLVKMNETWVFSSACAASLSEAVDFLPFRVDYQEKFSSAGRTSGGFLKREGRPSEREILVSRLMDRSLRPSFPNRLMQDIQVLSYVWSYDGKTLPDPLAICGASAALAISEVPQNCIVAGVRVGLVGGKWVINPTRDELSASKLDLVMAGTASAVLMIEGHCDFLTEEQVLEAIAFGQTYIAKICDAIEAWQKAIGKQKNFSAVLDMPEDVQNVVSDFIREKFEKALSFRDKEALEQASKELEESVIANLVQEENSDFSLLNVKAAFKTAKSNQMRALIQDLGIRVDGRTTTEIRPISIETPFLPRTHGSCLFTRGETQSMAVCTLGGENMAQRFEDLNGDGAARFYLQYFFPPFSVGEVGRIGSPGRREIGHGKLAEKALSHVLPETSRFPYIIRLESNITESNGSSSMASVCGGCLALMDAGVPIKAPVAGIAMGLILDRDQAIILSDISGIEDHLGDMDFKVAGTAKGITAFQMDIKIEGITHKIMEQALAQAKQGRSHILNLMTQVLASPKGTVSKYAPRIETMQINTSKIATVIGPGGKQIRQIIERSGAQVDINDDGVINIAASTQESINKAKELIEGLTGEVEVGKVYNGRVTSIATFGVFVEVLPGKEGLCHISELSKQKVDNISDFVKEGDKLAVKLLSINEKGQLKLSHKATLED</sequence>
<organism>
    <name type="scientific">Chlamydia trachomatis serovar D (strain ATCC VR-885 / DSM 19411 / UW-3/Cx)</name>
    <dbReference type="NCBI Taxonomy" id="272561"/>
    <lineage>
        <taxon>Bacteria</taxon>
        <taxon>Pseudomonadati</taxon>
        <taxon>Chlamydiota</taxon>
        <taxon>Chlamydiia</taxon>
        <taxon>Chlamydiales</taxon>
        <taxon>Chlamydiaceae</taxon>
        <taxon>Chlamydia/Chlamydophila group</taxon>
        <taxon>Chlamydia</taxon>
    </lineage>
</organism>
<proteinExistence type="inferred from homology"/>
<comment type="function">
    <text evidence="1">Involved in mRNA degradation. Catalyzes the phosphorolysis of single-stranded polyribonucleotides processively in the 3'- to 5'-direction.</text>
</comment>
<comment type="catalytic activity">
    <reaction evidence="1">
        <text>RNA(n+1) + phosphate = RNA(n) + a ribonucleoside 5'-diphosphate</text>
        <dbReference type="Rhea" id="RHEA:22096"/>
        <dbReference type="Rhea" id="RHEA-COMP:14527"/>
        <dbReference type="Rhea" id="RHEA-COMP:17342"/>
        <dbReference type="ChEBI" id="CHEBI:43474"/>
        <dbReference type="ChEBI" id="CHEBI:57930"/>
        <dbReference type="ChEBI" id="CHEBI:140395"/>
        <dbReference type="EC" id="2.7.7.8"/>
    </reaction>
</comment>
<comment type="cofactor">
    <cofactor evidence="1">
        <name>Mg(2+)</name>
        <dbReference type="ChEBI" id="CHEBI:18420"/>
    </cofactor>
</comment>
<comment type="subcellular location">
    <subcellularLocation>
        <location evidence="1">Cytoplasm</location>
    </subcellularLocation>
</comment>
<comment type="similarity">
    <text evidence="1">Belongs to the polyribonucleotide nucleotidyltransferase family.</text>
</comment>
<evidence type="ECO:0000255" key="1">
    <source>
        <dbReference type="HAMAP-Rule" id="MF_01595"/>
    </source>
</evidence>
<keyword id="KW-0963">Cytoplasm</keyword>
<keyword id="KW-0460">Magnesium</keyword>
<keyword id="KW-0479">Metal-binding</keyword>
<keyword id="KW-0548">Nucleotidyltransferase</keyword>
<keyword id="KW-1185">Reference proteome</keyword>
<keyword id="KW-0694">RNA-binding</keyword>
<keyword id="KW-0808">Transferase</keyword>
<accession>O84849</accession>
<protein>
    <recommendedName>
        <fullName evidence="1">Polyribonucleotide nucleotidyltransferase</fullName>
        <ecNumber evidence="1">2.7.7.8</ecNumber>
    </recommendedName>
    <alternativeName>
        <fullName evidence="1">Polynucleotide phosphorylase</fullName>
        <shortName evidence="1">PNPase</shortName>
    </alternativeName>
</protein>
<feature type="chain" id="PRO_0000329580" description="Polyribonucleotide nucleotidyltransferase">
    <location>
        <begin position="1"/>
        <end position="695"/>
    </location>
</feature>
<feature type="domain" description="KH" evidence="1">
    <location>
        <begin position="553"/>
        <end position="612"/>
    </location>
</feature>
<feature type="domain" description="S1 motif" evidence="1">
    <location>
        <begin position="622"/>
        <end position="690"/>
    </location>
</feature>
<feature type="binding site" evidence="1">
    <location>
        <position position="486"/>
    </location>
    <ligand>
        <name>Mg(2+)</name>
        <dbReference type="ChEBI" id="CHEBI:18420"/>
    </ligand>
</feature>
<feature type="binding site" evidence="1">
    <location>
        <position position="492"/>
    </location>
    <ligand>
        <name>Mg(2+)</name>
        <dbReference type="ChEBI" id="CHEBI:18420"/>
    </ligand>
</feature>
<dbReference type="EC" id="2.7.7.8" evidence="1"/>
<dbReference type="EMBL" id="AE001273">
    <property type="protein sequence ID" value="AAC68439.1"/>
    <property type="molecule type" value="Genomic_DNA"/>
</dbReference>
<dbReference type="PIR" id="E71463">
    <property type="entry name" value="E71463"/>
</dbReference>
<dbReference type="RefSeq" id="NP_220363.1">
    <property type="nucleotide sequence ID" value="NC_000117.1"/>
</dbReference>
<dbReference type="RefSeq" id="WP_010725366.1">
    <property type="nucleotide sequence ID" value="NC_000117.1"/>
</dbReference>
<dbReference type="SMR" id="O84849"/>
<dbReference type="FunCoup" id="O84849">
    <property type="interactions" value="295"/>
</dbReference>
<dbReference type="STRING" id="272561.CT_842"/>
<dbReference type="EnsemblBacteria" id="AAC68439">
    <property type="protein sequence ID" value="AAC68439"/>
    <property type="gene ID" value="CT_842"/>
</dbReference>
<dbReference type="GeneID" id="884643"/>
<dbReference type="KEGG" id="ctr:CT_842"/>
<dbReference type="PATRIC" id="fig|272561.5.peg.929"/>
<dbReference type="HOGENOM" id="CLU_004217_2_2_0"/>
<dbReference type="InParanoid" id="O84849"/>
<dbReference type="OrthoDB" id="9804305at2"/>
<dbReference type="Proteomes" id="UP000000431">
    <property type="component" value="Chromosome"/>
</dbReference>
<dbReference type="GO" id="GO:0005829">
    <property type="term" value="C:cytosol"/>
    <property type="evidence" value="ECO:0000318"/>
    <property type="project" value="GO_Central"/>
</dbReference>
<dbReference type="GO" id="GO:0000175">
    <property type="term" value="F:3'-5'-RNA exonuclease activity"/>
    <property type="evidence" value="ECO:0000318"/>
    <property type="project" value="GO_Central"/>
</dbReference>
<dbReference type="GO" id="GO:0000287">
    <property type="term" value="F:magnesium ion binding"/>
    <property type="evidence" value="ECO:0007669"/>
    <property type="project" value="UniProtKB-UniRule"/>
</dbReference>
<dbReference type="GO" id="GO:0004654">
    <property type="term" value="F:polyribonucleotide nucleotidyltransferase activity"/>
    <property type="evidence" value="ECO:0000318"/>
    <property type="project" value="GO_Central"/>
</dbReference>
<dbReference type="GO" id="GO:0003723">
    <property type="term" value="F:RNA binding"/>
    <property type="evidence" value="ECO:0007669"/>
    <property type="project" value="UniProtKB-UniRule"/>
</dbReference>
<dbReference type="GO" id="GO:0006402">
    <property type="term" value="P:mRNA catabolic process"/>
    <property type="evidence" value="ECO:0007669"/>
    <property type="project" value="UniProtKB-UniRule"/>
</dbReference>
<dbReference type="GO" id="GO:0006401">
    <property type="term" value="P:RNA catabolic process"/>
    <property type="evidence" value="ECO:0000318"/>
    <property type="project" value="GO_Central"/>
</dbReference>
<dbReference type="GO" id="GO:0006396">
    <property type="term" value="P:RNA processing"/>
    <property type="evidence" value="ECO:0007669"/>
    <property type="project" value="InterPro"/>
</dbReference>
<dbReference type="CDD" id="cd02393">
    <property type="entry name" value="KH-I_PNPase"/>
    <property type="match status" value="1"/>
</dbReference>
<dbReference type="CDD" id="cd11363">
    <property type="entry name" value="RNase_PH_PNPase_1"/>
    <property type="match status" value="1"/>
</dbReference>
<dbReference type="CDD" id="cd11364">
    <property type="entry name" value="RNase_PH_PNPase_2"/>
    <property type="match status" value="1"/>
</dbReference>
<dbReference type="CDD" id="cd04472">
    <property type="entry name" value="S1_PNPase"/>
    <property type="match status" value="1"/>
</dbReference>
<dbReference type="FunFam" id="3.30.1370.10:FF:000001">
    <property type="entry name" value="Polyribonucleotide nucleotidyltransferase"/>
    <property type="match status" value="1"/>
</dbReference>
<dbReference type="FunFam" id="3.30.230.70:FF:000001">
    <property type="entry name" value="Polyribonucleotide nucleotidyltransferase"/>
    <property type="match status" value="1"/>
</dbReference>
<dbReference type="FunFam" id="3.30.230.70:FF:000049">
    <property type="entry name" value="Polyribonucleotide nucleotidyltransferase"/>
    <property type="match status" value="1"/>
</dbReference>
<dbReference type="FunFam" id="2.40.50.140:FF:000158">
    <property type="entry name" value="Polyribonucleotide nucleotidyltransferase 1, chloroplastic"/>
    <property type="match status" value="1"/>
</dbReference>
<dbReference type="Gene3D" id="3.30.230.70">
    <property type="entry name" value="GHMP Kinase, N-terminal domain"/>
    <property type="match status" value="2"/>
</dbReference>
<dbReference type="Gene3D" id="3.30.1370.10">
    <property type="entry name" value="K Homology domain, type 1"/>
    <property type="match status" value="1"/>
</dbReference>
<dbReference type="Gene3D" id="2.40.50.140">
    <property type="entry name" value="Nucleic acid-binding proteins"/>
    <property type="match status" value="1"/>
</dbReference>
<dbReference type="HAMAP" id="MF_01595">
    <property type="entry name" value="PNPase"/>
    <property type="match status" value="1"/>
</dbReference>
<dbReference type="InterPro" id="IPR001247">
    <property type="entry name" value="ExoRNase_PH_dom1"/>
</dbReference>
<dbReference type="InterPro" id="IPR015847">
    <property type="entry name" value="ExoRNase_PH_dom2"/>
</dbReference>
<dbReference type="InterPro" id="IPR036345">
    <property type="entry name" value="ExoRNase_PH_dom2_sf"/>
</dbReference>
<dbReference type="InterPro" id="IPR004087">
    <property type="entry name" value="KH_dom"/>
</dbReference>
<dbReference type="InterPro" id="IPR004088">
    <property type="entry name" value="KH_dom_type_1"/>
</dbReference>
<dbReference type="InterPro" id="IPR036612">
    <property type="entry name" value="KH_dom_type_1_sf"/>
</dbReference>
<dbReference type="InterPro" id="IPR012340">
    <property type="entry name" value="NA-bd_OB-fold"/>
</dbReference>
<dbReference type="InterPro" id="IPR012162">
    <property type="entry name" value="PNPase"/>
</dbReference>
<dbReference type="InterPro" id="IPR027408">
    <property type="entry name" value="PNPase/RNase_PH_dom_sf"/>
</dbReference>
<dbReference type="InterPro" id="IPR015848">
    <property type="entry name" value="PNPase_PH_RNA-bd_bac/org-type"/>
</dbReference>
<dbReference type="InterPro" id="IPR036456">
    <property type="entry name" value="PNPase_PH_RNA-bd_sf"/>
</dbReference>
<dbReference type="InterPro" id="IPR020568">
    <property type="entry name" value="Ribosomal_Su5_D2-typ_SF"/>
</dbReference>
<dbReference type="InterPro" id="IPR003029">
    <property type="entry name" value="S1_domain"/>
</dbReference>
<dbReference type="NCBIfam" id="TIGR03591">
    <property type="entry name" value="polynuc_phos"/>
    <property type="match status" value="1"/>
</dbReference>
<dbReference type="NCBIfam" id="NF008805">
    <property type="entry name" value="PRK11824.1"/>
    <property type="match status" value="1"/>
</dbReference>
<dbReference type="PANTHER" id="PTHR11252">
    <property type="entry name" value="POLYRIBONUCLEOTIDE NUCLEOTIDYLTRANSFERASE"/>
    <property type="match status" value="1"/>
</dbReference>
<dbReference type="PANTHER" id="PTHR11252:SF0">
    <property type="entry name" value="POLYRIBONUCLEOTIDE NUCLEOTIDYLTRANSFERASE 1, MITOCHONDRIAL"/>
    <property type="match status" value="1"/>
</dbReference>
<dbReference type="Pfam" id="PF00013">
    <property type="entry name" value="KH_1"/>
    <property type="match status" value="1"/>
</dbReference>
<dbReference type="Pfam" id="PF03726">
    <property type="entry name" value="PNPase"/>
    <property type="match status" value="1"/>
</dbReference>
<dbReference type="Pfam" id="PF01138">
    <property type="entry name" value="RNase_PH"/>
    <property type="match status" value="2"/>
</dbReference>
<dbReference type="Pfam" id="PF03725">
    <property type="entry name" value="RNase_PH_C"/>
    <property type="match status" value="2"/>
</dbReference>
<dbReference type="Pfam" id="PF00575">
    <property type="entry name" value="S1"/>
    <property type="match status" value="1"/>
</dbReference>
<dbReference type="PIRSF" id="PIRSF005499">
    <property type="entry name" value="PNPase"/>
    <property type="match status" value="1"/>
</dbReference>
<dbReference type="SMART" id="SM00322">
    <property type="entry name" value="KH"/>
    <property type="match status" value="1"/>
</dbReference>
<dbReference type="SMART" id="SM00316">
    <property type="entry name" value="S1"/>
    <property type="match status" value="1"/>
</dbReference>
<dbReference type="SUPFAM" id="SSF54791">
    <property type="entry name" value="Eukaryotic type KH-domain (KH-domain type I)"/>
    <property type="match status" value="1"/>
</dbReference>
<dbReference type="SUPFAM" id="SSF50249">
    <property type="entry name" value="Nucleic acid-binding proteins"/>
    <property type="match status" value="1"/>
</dbReference>
<dbReference type="SUPFAM" id="SSF46915">
    <property type="entry name" value="Polynucleotide phosphorylase/guanosine pentaphosphate synthase (PNPase/GPSI), domain 3"/>
    <property type="match status" value="1"/>
</dbReference>
<dbReference type="SUPFAM" id="SSF55666">
    <property type="entry name" value="Ribonuclease PH domain 2-like"/>
    <property type="match status" value="2"/>
</dbReference>
<dbReference type="SUPFAM" id="SSF54211">
    <property type="entry name" value="Ribosomal protein S5 domain 2-like"/>
    <property type="match status" value="2"/>
</dbReference>
<dbReference type="PROSITE" id="PS50084">
    <property type="entry name" value="KH_TYPE_1"/>
    <property type="match status" value="1"/>
</dbReference>
<dbReference type="PROSITE" id="PS50126">
    <property type="entry name" value="S1"/>
    <property type="match status" value="1"/>
</dbReference>
<name>PNP_CHLTR</name>
<reference key="1">
    <citation type="journal article" date="1998" name="Science">
        <title>Genome sequence of an obligate intracellular pathogen of humans: Chlamydia trachomatis.</title>
        <authorList>
            <person name="Stephens R.S."/>
            <person name="Kalman S."/>
            <person name="Lammel C.J."/>
            <person name="Fan J."/>
            <person name="Marathe R."/>
            <person name="Aravind L."/>
            <person name="Mitchell W.P."/>
            <person name="Olinger L."/>
            <person name="Tatusov R.L."/>
            <person name="Zhao Q."/>
            <person name="Koonin E.V."/>
            <person name="Davis R.W."/>
        </authorList>
    </citation>
    <scope>NUCLEOTIDE SEQUENCE [LARGE SCALE GENOMIC DNA]</scope>
    <source>
        <strain>ATCC VR-885 / DSM 19411 / UW-3/Cx</strain>
    </source>
</reference>
<gene>
    <name evidence="1" type="primary">pnp</name>
    <name type="ordered locus">CT_842</name>
</gene>